<protein>
    <recommendedName>
        <fullName>Uncharacterized transporter BUsg_270</fullName>
    </recommendedName>
</protein>
<reference key="1">
    <citation type="journal article" date="1993" name="J. Bacteriol.">
        <title>Molecular cloning and nucleotide sequence of a putative trpDC(F)BA operon in Buchnera aphidicola (endosymbiont of the aphid Schizaphis graminum).</title>
        <authorList>
            <person name="Munson M.A."/>
            <person name="Baumann P."/>
        </authorList>
    </citation>
    <scope>NUCLEOTIDE SEQUENCE [GENOMIC DNA]</scope>
</reference>
<reference key="2">
    <citation type="journal article" date="2002" name="Science">
        <title>50 million years of genomic stasis in endosymbiotic bacteria.</title>
        <authorList>
            <person name="Tamas I."/>
            <person name="Klasson L."/>
            <person name="Canbaeck B."/>
            <person name="Naeslund A.K."/>
            <person name="Eriksson A.-S."/>
            <person name="Wernegreen J.J."/>
            <person name="Sandstroem J.P."/>
            <person name="Moran N.A."/>
            <person name="Andersson S.G.E."/>
        </authorList>
    </citation>
    <scope>NUCLEOTIDE SEQUENCE [LARGE SCALE GENOMIC DNA]</scope>
    <source>
        <strain>Sg</strain>
    </source>
</reference>
<gene>
    <name type="ordered locus">BUsg_270</name>
</gene>
<feature type="chain" id="PRO_0000108198" description="Uncharacterized transporter BUsg_270">
    <location>
        <begin position="1"/>
        <end position="300"/>
    </location>
</feature>
<feature type="transmembrane region" description="Helical" evidence="1">
    <location>
        <begin position="4"/>
        <end position="24"/>
    </location>
</feature>
<feature type="transmembrane region" description="Helical" evidence="1">
    <location>
        <begin position="31"/>
        <end position="51"/>
    </location>
</feature>
<feature type="transmembrane region" description="Helical" evidence="1">
    <location>
        <begin position="68"/>
        <end position="88"/>
    </location>
</feature>
<feature type="transmembrane region" description="Helical" evidence="1">
    <location>
        <begin position="95"/>
        <end position="115"/>
    </location>
</feature>
<feature type="transmembrane region" description="Helical" evidence="1">
    <location>
        <begin position="120"/>
        <end position="140"/>
    </location>
</feature>
<feature type="transmembrane region" description="Helical" evidence="1">
    <location>
        <begin position="146"/>
        <end position="166"/>
    </location>
</feature>
<feature type="transmembrane region" description="Helical" evidence="1">
    <location>
        <begin position="177"/>
        <end position="197"/>
    </location>
</feature>
<feature type="transmembrane region" description="Helical" evidence="1">
    <location>
        <begin position="214"/>
        <end position="234"/>
    </location>
</feature>
<feature type="transmembrane region" description="Helical" evidence="1">
    <location>
        <begin position="242"/>
        <end position="262"/>
    </location>
</feature>
<feature type="transmembrane region" description="Helical" evidence="1">
    <location>
        <begin position="272"/>
        <end position="292"/>
    </location>
</feature>
<feature type="domain" description="EamA 1">
    <location>
        <begin position="15"/>
        <end position="139"/>
    </location>
</feature>
<feature type="domain" description="EamA 2">
    <location>
        <begin position="161"/>
        <end position="287"/>
    </location>
</feature>
<comment type="subcellular location">
    <subcellularLocation>
        <location evidence="2">Cell membrane</location>
        <topology evidence="2">Multi-pass membrane protein</topology>
    </subcellularLocation>
</comment>
<comment type="similarity">
    <text evidence="2">Belongs to the EamA transporter family.</text>
</comment>
<proteinExistence type="inferred from homology"/>
<keyword id="KW-1003">Cell membrane</keyword>
<keyword id="KW-0472">Membrane</keyword>
<keyword id="KW-0677">Repeat</keyword>
<keyword id="KW-0812">Transmembrane</keyword>
<keyword id="KW-1133">Transmembrane helix</keyword>
<keyword id="KW-0813">Transport</keyword>
<accession>P42394</accession>
<dbReference type="EMBL" id="Z19055">
    <property type="protein sequence ID" value="CAA79502.1"/>
    <property type="molecule type" value="Genomic_DNA"/>
</dbReference>
<dbReference type="EMBL" id="AE013218">
    <property type="protein sequence ID" value="AAM67828.1"/>
    <property type="molecule type" value="Genomic_DNA"/>
</dbReference>
<dbReference type="PIR" id="S36430">
    <property type="entry name" value="S36430"/>
</dbReference>
<dbReference type="RefSeq" id="WP_011053795.1">
    <property type="nucleotide sequence ID" value="NC_004061.1"/>
</dbReference>
<dbReference type="SMR" id="P42394"/>
<dbReference type="STRING" id="198804.BUsg_270"/>
<dbReference type="TCDB" id="2.A.7.3.27">
    <property type="family name" value="the drug/metabolite transporter (dmt) superfamily"/>
</dbReference>
<dbReference type="GeneID" id="93003740"/>
<dbReference type="KEGG" id="bas:BUsg_270"/>
<dbReference type="eggNOG" id="COG0697">
    <property type="taxonomic scope" value="Bacteria"/>
</dbReference>
<dbReference type="HOGENOM" id="CLU_033863_5_3_6"/>
<dbReference type="Proteomes" id="UP000000416">
    <property type="component" value="Chromosome"/>
</dbReference>
<dbReference type="GO" id="GO:0005886">
    <property type="term" value="C:plasma membrane"/>
    <property type="evidence" value="ECO:0007669"/>
    <property type="project" value="UniProtKB-SubCell"/>
</dbReference>
<dbReference type="InterPro" id="IPR050638">
    <property type="entry name" value="AA-Vitamin_Transporters"/>
</dbReference>
<dbReference type="InterPro" id="IPR000620">
    <property type="entry name" value="EamA_dom"/>
</dbReference>
<dbReference type="PANTHER" id="PTHR32322">
    <property type="entry name" value="INNER MEMBRANE TRANSPORTER"/>
    <property type="match status" value="1"/>
</dbReference>
<dbReference type="PANTHER" id="PTHR32322:SF14">
    <property type="entry name" value="PROTEIN PAGO"/>
    <property type="match status" value="1"/>
</dbReference>
<dbReference type="Pfam" id="PF00892">
    <property type="entry name" value="EamA"/>
    <property type="match status" value="2"/>
</dbReference>
<dbReference type="SUPFAM" id="SSF103481">
    <property type="entry name" value="Multidrug resistance efflux transporter EmrE"/>
    <property type="match status" value="2"/>
</dbReference>
<sequence length="300" mass="34376">MHKIIIIMLFFLVSITWGTTWIAMKIAVETIPPFFATGIRFLAASPLLIILSYLTKKPLLFPYGQRRFQIFISIFYFSIPFTLMLYGGSYVNSSISSIIFANMPVLVLIISHFYLKKKINFIQKVGMVIALITLFFVLLIDLKSECFFQWKGILALLLALLSHAVIYVECQKKSCNVSVITFNALPSLISGIFLSIISWFIESPNINFFSTRSILAVFYLGNFCGICGILSYFYLQKRVSSFYASIVFLIFPLIAGFLEIYIYKKTILLYELWFIIPSGLGILLTLIPINFFKNIIRFSK</sequence>
<name>Y270_BUCAP</name>
<organism>
    <name type="scientific">Buchnera aphidicola subsp. Schizaphis graminum (strain Sg)</name>
    <dbReference type="NCBI Taxonomy" id="198804"/>
    <lineage>
        <taxon>Bacteria</taxon>
        <taxon>Pseudomonadati</taxon>
        <taxon>Pseudomonadota</taxon>
        <taxon>Gammaproteobacteria</taxon>
        <taxon>Enterobacterales</taxon>
        <taxon>Erwiniaceae</taxon>
        <taxon>Buchnera</taxon>
    </lineage>
</organism>
<evidence type="ECO:0000255" key="1"/>
<evidence type="ECO:0000305" key="2"/>